<evidence type="ECO:0000250" key="1">
    <source>
        <dbReference type="UniProtKB" id="Q8Y3L4"/>
    </source>
</evidence>
<evidence type="ECO:0000255" key="2"/>
<evidence type="ECO:0000255" key="3">
    <source>
        <dbReference type="PROSITE-ProRule" id="PRU00477"/>
    </source>
</evidence>
<evidence type="ECO:0000256" key="4">
    <source>
        <dbReference type="SAM" id="MobiDB-lite"/>
    </source>
</evidence>
<evidence type="ECO:0000305" key="5"/>
<proteinExistence type="inferred from homology"/>
<reference key="1">
    <citation type="journal article" date="2004" name="Nucleic Acids Res.">
        <title>Whole genome comparisons of serotype 4b and 1/2a strains of the food-borne pathogen Listeria monocytogenes reveal new insights into the core genome components of this species.</title>
        <authorList>
            <person name="Nelson K.E."/>
            <person name="Fouts D.E."/>
            <person name="Mongodin E.F."/>
            <person name="Ravel J."/>
            <person name="DeBoy R.T."/>
            <person name="Kolonay J.F."/>
            <person name="Rasko D.A."/>
            <person name="Angiuoli S.V."/>
            <person name="Gill S.R."/>
            <person name="Paulsen I.T."/>
            <person name="Peterson J.D."/>
            <person name="White O."/>
            <person name="Nelson W.C."/>
            <person name="Nierman W.C."/>
            <person name="Beanan M.J."/>
            <person name="Brinkac L.M."/>
            <person name="Daugherty S.C."/>
            <person name="Dodson R.J."/>
            <person name="Durkin A.S."/>
            <person name="Madupu R."/>
            <person name="Haft D.H."/>
            <person name="Selengut J."/>
            <person name="Van Aken S.E."/>
            <person name="Khouri H.M."/>
            <person name="Fedorova N."/>
            <person name="Forberger H.A."/>
            <person name="Tran B."/>
            <person name="Kathariou S."/>
            <person name="Wonderling L.D."/>
            <person name="Uhlich G.A."/>
            <person name="Bayles D.O."/>
            <person name="Luchansky J.B."/>
            <person name="Fraser C.M."/>
        </authorList>
    </citation>
    <scope>NUCLEOTIDE SEQUENCE [LARGE SCALE GENOMIC DNA]</scope>
    <source>
        <strain>F2365</strain>
    </source>
</reference>
<protein>
    <recommendedName>
        <fullName>Internalin J</fullName>
    </recommendedName>
</protein>
<dbReference type="EMBL" id="AE017262">
    <property type="protein sequence ID" value="AAT05576.1"/>
    <property type="molecule type" value="Genomic_DNA"/>
</dbReference>
<dbReference type="RefSeq" id="WP_010959113.1">
    <property type="nucleotide sequence ID" value="NC_002973.6"/>
</dbReference>
<dbReference type="SMR" id="Q71VU0"/>
<dbReference type="KEGG" id="lmf:LMOf2365_2812"/>
<dbReference type="HOGENOM" id="CLU_320241_0_0_9"/>
<dbReference type="GO" id="GO:0005576">
    <property type="term" value="C:extracellular region"/>
    <property type="evidence" value="ECO:0007669"/>
    <property type="project" value="UniProtKB-KW"/>
</dbReference>
<dbReference type="GO" id="GO:0035591">
    <property type="term" value="F:signaling adaptor activity"/>
    <property type="evidence" value="ECO:0007669"/>
    <property type="project" value="TreeGrafter"/>
</dbReference>
<dbReference type="GO" id="GO:0007155">
    <property type="term" value="P:cell adhesion"/>
    <property type="evidence" value="ECO:0007669"/>
    <property type="project" value="UniProtKB-KW"/>
</dbReference>
<dbReference type="Gene3D" id="2.60.40.1220">
    <property type="match status" value="1"/>
</dbReference>
<dbReference type="Gene3D" id="3.10.20.320">
    <property type="entry name" value="Putative peptidoglycan bound protein (lpxtg motif)"/>
    <property type="match status" value="5"/>
</dbReference>
<dbReference type="Gene3D" id="3.80.10.10">
    <property type="entry name" value="Ribonuclease Inhibitor"/>
    <property type="match status" value="1"/>
</dbReference>
<dbReference type="InterPro" id="IPR052574">
    <property type="entry name" value="CDIRP"/>
</dbReference>
<dbReference type="InterPro" id="IPR014755">
    <property type="entry name" value="Cu-Rt/internalin_Ig-like"/>
</dbReference>
<dbReference type="InterPro" id="IPR054769">
    <property type="entry name" value="InlJ_EF-hand"/>
</dbReference>
<dbReference type="InterPro" id="IPR054717">
    <property type="entry name" value="InlJ_Ig-like"/>
</dbReference>
<dbReference type="InterPro" id="IPR019931">
    <property type="entry name" value="LPXTG_anchor"/>
</dbReference>
<dbReference type="InterPro" id="IPR032675">
    <property type="entry name" value="LRR_dom_sf"/>
</dbReference>
<dbReference type="InterPro" id="IPR009459">
    <property type="entry name" value="MucBP_dom"/>
</dbReference>
<dbReference type="NCBIfam" id="TIGR01167">
    <property type="entry name" value="LPXTG_anchor"/>
    <property type="match status" value="1"/>
</dbReference>
<dbReference type="PANTHER" id="PTHR47566">
    <property type="match status" value="1"/>
</dbReference>
<dbReference type="PANTHER" id="PTHR47566:SF1">
    <property type="entry name" value="PROTEIN NUD1"/>
    <property type="match status" value="1"/>
</dbReference>
<dbReference type="Pfam" id="PF22508">
    <property type="entry name" value="InlJ_IG"/>
    <property type="match status" value="1"/>
</dbReference>
<dbReference type="Pfam" id="PF22350">
    <property type="entry name" value="Int_EF-hand"/>
    <property type="match status" value="1"/>
</dbReference>
<dbReference type="Pfam" id="PF06458">
    <property type="entry name" value="MucBP"/>
    <property type="match status" value="5"/>
</dbReference>
<dbReference type="SUPFAM" id="SSF52058">
    <property type="entry name" value="L domain-like"/>
    <property type="match status" value="1"/>
</dbReference>
<dbReference type="PROSITE" id="PS50847">
    <property type="entry name" value="GRAM_POS_ANCHORING"/>
    <property type="match status" value="1"/>
</dbReference>
<organism>
    <name type="scientific">Listeria monocytogenes serotype 4b (strain F2365)</name>
    <dbReference type="NCBI Taxonomy" id="265669"/>
    <lineage>
        <taxon>Bacteria</taxon>
        <taxon>Bacillati</taxon>
        <taxon>Bacillota</taxon>
        <taxon>Bacilli</taxon>
        <taxon>Bacillales</taxon>
        <taxon>Listeriaceae</taxon>
        <taxon>Listeria</taxon>
    </lineage>
</organism>
<sequence>MKTSKIIIASLVSLTLVSNPILTFAATNDVIDSTTEITTDKEISSTQPTIKTTLKAGQTQSFNDWFPDDNFASEVAAAFEMQATDTISEEQLATLTSLDCHNSSIADMTGIEKLTGLTKLICTYNNITTLDLSQNTNLTYLACDSNKLTNLDVTPLTKLTYLNCDTNKLTKIDVSQNPLLTYLNCARNTLTEIDVSHNTQLTELDCHLNKKITKLDVTPQTQLTTLDCSFNKITALDVSQNKLLNRLNCDTNNITKLDLNQNIQLTFLNCSSNKLTEIDVTPLTQLTYFDCSVNPLTELDVSTLSKLTTLHCIQTDLLEIDLTHNTQLIYFQAEGCRKIKELDVTHNTQLYLLDCQAAGITELDLSQNPKLVYLYLNNTELTKLDVSHNTKLKSLSCVNAHIQDFSSVGKIPVLNNNLDAEGQTITMPKETLTNNSLTIAVSPDLLDQFGNPMNIEPGDGGVYDQATNTITWENLSTDNPAVTYTFTSENGAIVGTVTTPFEAPQPIKGEDVTVHYLDDKGEKLAADEVLSGNLDDPYTSSAKDIPDYTLTTTPDNATGTFTTTSQSVTYVYTKNIVAAEPVTVNYVDDTGKTLAPSETLNGNVGDTYNATAKQIDGYTLSTTPNNATGTFNTSSQTVTYVYTKNIVAAEPVTVNYVDDTGKTLAPSETLNGNVGDTYNATAKQIDGYTLSAEPTNATGQFTSSAQTVNYIYTKNPAPEKGVVEIHYVDENNKQLSSATKISGTVGDNYTTEPKNIDGYTLTTTPDNATGTFNTSSQTVTYVYTKNIVAAEPVTVNYVDANGKTLAPSETLNGTIGDTYNATAKQIDGYTLSAEPTNATGQFTNSAQTVNYIYTKNTNIDQPLPDKKTTKPSNLKTTEVKKASDTLPKTGDSTPWKSALLGVFLSSTALVIWKKKK</sequence>
<gene>
    <name type="primary">inlJ</name>
    <name type="ordered locus">LMOf2365_2812</name>
</gene>
<comment type="function">
    <text evidence="1">Involved in several steps of L.monocytogenes infection, probably improves adhesin to host cells.</text>
</comment>
<comment type="subcellular location">
    <subcellularLocation>
        <location evidence="3">Secreted</location>
        <location evidence="3">Cell wall</location>
        <topology evidence="3">Peptidoglycan-anchor</topology>
    </subcellularLocation>
</comment>
<comment type="similarity">
    <text evidence="5">Belongs to the internalin family.</text>
</comment>
<keyword id="KW-0130">Cell adhesion</keyword>
<keyword id="KW-0134">Cell wall</keyword>
<keyword id="KW-0433">Leucine-rich repeat</keyword>
<keyword id="KW-0572">Peptidoglycan-anchor</keyword>
<keyword id="KW-0677">Repeat</keyword>
<keyword id="KW-0964">Secreted</keyword>
<keyword id="KW-0732">Signal</keyword>
<keyword id="KW-0843">Virulence</keyword>
<accession>Q71VU0</accession>
<feature type="signal peptide" evidence="2">
    <location>
        <begin position="1"/>
        <end position="25"/>
    </location>
</feature>
<feature type="chain" id="PRO_0000252677" description="Internalin J">
    <location>
        <begin position="26"/>
        <end position="889"/>
    </location>
</feature>
<feature type="propeptide" id="PRO_0000252678" description="Removed by sortase" evidence="3">
    <location>
        <begin position="890"/>
        <end position="916"/>
    </location>
</feature>
<feature type="repeat" description="LRR 1">
    <location>
        <begin position="94"/>
        <end position="115"/>
    </location>
</feature>
<feature type="repeat" description="LRR 2">
    <location>
        <begin position="116"/>
        <end position="136"/>
    </location>
</feature>
<feature type="repeat" description="LRR 3">
    <location>
        <begin position="137"/>
        <end position="157"/>
    </location>
</feature>
<feature type="repeat" description="LRR 4">
    <location>
        <begin position="158"/>
        <end position="179"/>
    </location>
</feature>
<feature type="repeat" description="LRR 5">
    <location>
        <begin position="180"/>
        <end position="200"/>
    </location>
</feature>
<feature type="repeat" description="LRR 6">
    <location>
        <begin position="201"/>
        <end position="221"/>
    </location>
</feature>
<feature type="repeat" description="LRR 7">
    <location>
        <begin position="222"/>
        <end position="243"/>
    </location>
</feature>
<feature type="repeat" description="LRR 8">
    <location>
        <begin position="244"/>
        <end position="263"/>
    </location>
</feature>
<feature type="repeat" description="LRR 9">
    <location>
        <begin position="264"/>
        <end position="284"/>
    </location>
</feature>
<feature type="repeat" description="LRR 10">
    <location>
        <begin position="285"/>
        <end position="306"/>
    </location>
</feature>
<feature type="repeat" description="LRR 11">
    <location>
        <begin position="316"/>
        <end position="325"/>
    </location>
</feature>
<feature type="repeat" description="LRR 12">
    <location>
        <begin position="338"/>
        <end position="357"/>
    </location>
</feature>
<feature type="repeat" description="LRR 13">
    <location>
        <begin position="359"/>
        <end position="368"/>
    </location>
</feature>
<feature type="repeat" description="LRR 14">
    <location>
        <begin position="380"/>
        <end position="402"/>
    </location>
</feature>
<feature type="domain" description="MucBP 1">
    <location>
        <begin position="506"/>
        <end position="568"/>
    </location>
</feature>
<feature type="domain" description="MucBP 2">
    <location>
        <begin position="576"/>
        <end position="638"/>
    </location>
</feature>
<feature type="domain" description="MucBP 3">
    <location>
        <begin position="646"/>
        <end position="708"/>
    </location>
</feature>
<feature type="domain" description="MucBP 4">
    <location>
        <begin position="717"/>
        <end position="779"/>
    </location>
</feature>
<feature type="domain" description="MucBP 5">
    <location>
        <begin position="787"/>
        <end position="849"/>
    </location>
</feature>
<feature type="region of interest" description="Disordered" evidence="4">
    <location>
        <begin position="862"/>
        <end position="888"/>
    </location>
</feature>
<feature type="short sequence motif" description="LPXTG sorting signal" evidence="3">
    <location>
        <begin position="886"/>
        <end position="890"/>
    </location>
</feature>
<feature type="modified residue" description="Pentaglycyl murein peptidoglycan amidated threonine" evidence="3">
    <location>
        <position position="889"/>
    </location>
</feature>
<name>INLJ_LISMF</name>